<name>AROA_BRUME</name>
<proteinExistence type="inferred from homology"/>
<reference key="1">
    <citation type="journal article" date="2002" name="Proc. Natl. Acad. Sci. U.S.A.">
        <title>The genome sequence of the facultative intracellular pathogen Brucella melitensis.</title>
        <authorList>
            <person name="DelVecchio V.G."/>
            <person name="Kapatral V."/>
            <person name="Redkar R.J."/>
            <person name="Patra G."/>
            <person name="Mujer C."/>
            <person name="Los T."/>
            <person name="Ivanova N."/>
            <person name="Anderson I."/>
            <person name="Bhattacharyya A."/>
            <person name="Lykidis A."/>
            <person name="Reznik G."/>
            <person name="Jablonski L."/>
            <person name="Larsen N."/>
            <person name="D'Souza M."/>
            <person name="Bernal A."/>
            <person name="Mazur M."/>
            <person name="Goltsman E."/>
            <person name="Selkov E."/>
            <person name="Elzer P.H."/>
            <person name="Hagius S."/>
            <person name="O'Callaghan D."/>
            <person name="Letesson J.-J."/>
            <person name="Haselkorn R."/>
            <person name="Kyrpides N.C."/>
            <person name="Overbeek R."/>
        </authorList>
    </citation>
    <scope>NUCLEOTIDE SEQUENCE [LARGE SCALE GENOMIC DNA]</scope>
    <source>
        <strain>ATCC 23456 / CCUG 17765 / NCTC 10094 / 16M</strain>
    </source>
</reference>
<protein>
    <recommendedName>
        <fullName evidence="1">3-phosphoshikimate 1-carboxyvinyltransferase</fullName>
        <ecNumber evidence="1">2.5.1.19</ecNumber>
    </recommendedName>
    <alternativeName>
        <fullName evidence="1">5-enolpyruvylshikimate-3-phosphate synthase</fullName>
        <shortName evidence="1">EPSP synthase</shortName>
        <shortName evidence="1">EPSPS</shortName>
    </alternativeName>
</protein>
<sequence length="450" mass="47207">MSHSACPKPATARHSQALTGEIRIPGDKSISHRSFMFGGLASGKTRITGLLEGEDVINTGRAMQAMGARIRKEGDVWIINGVGNGCLLQPEAPLDFGNAGTGARLTMGLVGTYDMKTSFIGDASLSKRPMGRVLNPLREMGVQVEAAEGDRMPLTLIGPRTANPIAYRVPMASAQVKSAVLLAGLNTPGVTTVIEPVMTRDHTEKMLQGFGADLTVETDKDGVRHIRIVGQGKLTGQTIDVPGDPSSTAFPLVAALLVEGSDVTIRNVLMNPTRTGLILTLQEMGADIEIIDPRLAGGEDVADLRVKASKLKGVVVPPERAPSMIDEYPVLAIAASFAEGETVMDGLDELRVKESDRLAAVARGLEANGVDCTEGEMSLTVRGRPGGKGLGGGTVGTHLDHRIAMSFLVMGLASEKPVTVDDSTMIATSFPEFMGMMAGLGAKIAESGAE</sequence>
<organism>
    <name type="scientific">Brucella melitensis biotype 1 (strain ATCC 23456 / CCUG 17765 / NCTC 10094 / 16M)</name>
    <dbReference type="NCBI Taxonomy" id="224914"/>
    <lineage>
        <taxon>Bacteria</taxon>
        <taxon>Pseudomonadati</taxon>
        <taxon>Pseudomonadota</taxon>
        <taxon>Alphaproteobacteria</taxon>
        <taxon>Hyphomicrobiales</taxon>
        <taxon>Brucellaceae</taxon>
        <taxon>Brucella/Ochrobactrum group</taxon>
        <taxon>Brucella</taxon>
    </lineage>
</organism>
<dbReference type="EC" id="2.5.1.19" evidence="1"/>
<dbReference type="EMBL" id="AE008917">
    <property type="protein sequence ID" value="AAL53098.1"/>
    <property type="status" value="ALT_INIT"/>
    <property type="molecule type" value="Genomic_DNA"/>
</dbReference>
<dbReference type="PIR" id="AG3491">
    <property type="entry name" value="AG3491"/>
</dbReference>
<dbReference type="RefSeq" id="WP_004684607.1">
    <property type="nucleotide sequence ID" value="NC_003317.1"/>
</dbReference>
<dbReference type="SMR" id="Q8YEG1"/>
<dbReference type="GeneID" id="29594798"/>
<dbReference type="KEGG" id="bme:BMEI1917"/>
<dbReference type="KEGG" id="bmel:DK63_1572"/>
<dbReference type="PATRIC" id="fig|224914.52.peg.1658"/>
<dbReference type="eggNOG" id="COG0128">
    <property type="taxonomic scope" value="Bacteria"/>
</dbReference>
<dbReference type="PhylomeDB" id="Q8YEG1"/>
<dbReference type="UniPathway" id="UPA00053">
    <property type="reaction ID" value="UER00089"/>
</dbReference>
<dbReference type="Proteomes" id="UP000000419">
    <property type="component" value="Chromosome I"/>
</dbReference>
<dbReference type="GO" id="GO:0005737">
    <property type="term" value="C:cytoplasm"/>
    <property type="evidence" value="ECO:0007669"/>
    <property type="project" value="UniProtKB-SubCell"/>
</dbReference>
<dbReference type="GO" id="GO:0003866">
    <property type="term" value="F:3-phosphoshikimate 1-carboxyvinyltransferase activity"/>
    <property type="evidence" value="ECO:0007669"/>
    <property type="project" value="UniProtKB-UniRule"/>
</dbReference>
<dbReference type="GO" id="GO:0008652">
    <property type="term" value="P:amino acid biosynthetic process"/>
    <property type="evidence" value="ECO:0007669"/>
    <property type="project" value="UniProtKB-KW"/>
</dbReference>
<dbReference type="GO" id="GO:0009073">
    <property type="term" value="P:aromatic amino acid family biosynthetic process"/>
    <property type="evidence" value="ECO:0007669"/>
    <property type="project" value="UniProtKB-KW"/>
</dbReference>
<dbReference type="GO" id="GO:0009423">
    <property type="term" value="P:chorismate biosynthetic process"/>
    <property type="evidence" value="ECO:0007669"/>
    <property type="project" value="UniProtKB-UniRule"/>
</dbReference>
<dbReference type="CDD" id="cd01556">
    <property type="entry name" value="EPSP_synthase"/>
    <property type="match status" value="1"/>
</dbReference>
<dbReference type="FunFam" id="3.65.10.10:FF:000006">
    <property type="entry name" value="3-phosphoshikimate 1-carboxyvinyltransferase"/>
    <property type="match status" value="1"/>
</dbReference>
<dbReference type="Gene3D" id="3.65.10.10">
    <property type="entry name" value="Enolpyruvate transferase domain"/>
    <property type="match status" value="2"/>
</dbReference>
<dbReference type="HAMAP" id="MF_00210">
    <property type="entry name" value="EPSP_synth"/>
    <property type="match status" value="1"/>
</dbReference>
<dbReference type="InterPro" id="IPR001986">
    <property type="entry name" value="Enolpyruvate_Tfrase_dom"/>
</dbReference>
<dbReference type="InterPro" id="IPR036968">
    <property type="entry name" value="Enolpyruvate_Tfrase_sf"/>
</dbReference>
<dbReference type="InterPro" id="IPR006264">
    <property type="entry name" value="EPSP_synthase"/>
</dbReference>
<dbReference type="InterPro" id="IPR023193">
    <property type="entry name" value="EPSP_synthase_CS"/>
</dbReference>
<dbReference type="InterPro" id="IPR013792">
    <property type="entry name" value="RNA3'P_cycl/enolpyr_Trfase_a/b"/>
</dbReference>
<dbReference type="NCBIfam" id="TIGR01356">
    <property type="entry name" value="aroA"/>
    <property type="match status" value="1"/>
</dbReference>
<dbReference type="PANTHER" id="PTHR21090">
    <property type="entry name" value="AROM/DEHYDROQUINATE SYNTHASE"/>
    <property type="match status" value="1"/>
</dbReference>
<dbReference type="PANTHER" id="PTHR21090:SF5">
    <property type="entry name" value="PENTAFUNCTIONAL AROM POLYPEPTIDE"/>
    <property type="match status" value="1"/>
</dbReference>
<dbReference type="Pfam" id="PF00275">
    <property type="entry name" value="EPSP_synthase"/>
    <property type="match status" value="1"/>
</dbReference>
<dbReference type="PIRSF" id="PIRSF000505">
    <property type="entry name" value="EPSPS"/>
    <property type="match status" value="1"/>
</dbReference>
<dbReference type="SUPFAM" id="SSF55205">
    <property type="entry name" value="EPT/RTPC-like"/>
    <property type="match status" value="1"/>
</dbReference>
<dbReference type="PROSITE" id="PS00104">
    <property type="entry name" value="EPSP_SYNTHASE_1"/>
    <property type="match status" value="1"/>
</dbReference>
<dbReference type="PROSITE" id="PS00885">
    <property type="entry name" value="EPSP_SYNTHASE_2"/>
    <property type="match status" value="1"/>
</dbReference>
<evidence type="ECO:0000255" key="1">
    <source>
        <dbReference type="HAMAP-Rule" id="MF_00210"/>
    </source>
</evidence>
<evidence type="ECO:0000305" key="2"/>
<gene>
    <name evidence="1" type="primary">aroA</name>
    <name type="ordered locus">BMEI1917</name>
</gene>
<feature type="chain" id="PRO_0000088233" description="3-phosphoshikimate 1-carboxyvinyltransferase">
    <location>
        <begin position="1"/>
        <end position="450"/>
    </location>
</feature>
<feature type="active site" description="Proton acceptor" evidence="1">
    <location>
        <position position="326"/>
    </location>
</feature>
<feature type="binding site" evidence="1">
    <location>
        <position position="28"/>
    </location>
    <ligand>
        <name>3-phosphoshikimate</name>
        <dbReference type="ChEBI" id="CHEBI:145989"/>
    </ligand>
</feature>
<feature type="binding site" evidence="1">
    <location>
        <position position="28"/>
    </location>
    <ligand>
        <name>phosphoenolpyruvate</name>
        <dbReference type="ChEBI" id="CHEBI:58702"/>
    </ligand>
</feature>
<feature type="binding site" evidence="1">
    <location>
        <position position="29"/>
    </location>
    <ligand>
        <name>3-phosphoshikimate</name>
        <dbReference type="ChEBI" id="CHEBI:145989"/>
    </ligand>
</feature>
<feature type="binding site" evidence="1">
    <location>
        <position position="33"/>
    </location>
    <ligand>
        <name>3-phosphoshikimate</name>
        <dbReference type="ChEBI" id="CHEBI:145989"/>
    </ligand>
</feature>
<feature type="binding site" evidence="1">
    <location>
        <position position="100"/>
    </location>
    <ligand>
        <name>phosphoenolpyruvate</name>
        <dbReference type="ChEBI" id="CHEBI:58702"/>
    </ligand>
</feature>
<feature type="binding site" evidence="1">
    <location>
        <position position="128"/>
    </location>
    <ligand>
        <name>phosphoenolpyruvate</name>
        <dbReference type="ChEBI" id="CHEBI:58702"/>
    </ligand>
</feature>
<feature type="binding site" evidence="1">
    <location>
        <position position="173"/>
    </location>
    <ligand>
        <name>3-phosphoshikimate</name>
        <dbReference type="ChEBI" id="CHEBI:145989"/>
    </ligand>
</feature>
<feature type="binding site" evidence="1">
    <location>
        <position position="175"/>
    </location>
    <ligand>
        <name>3-phosphoshikimate</name>
        <dbReference type="ChEBI" id="CHEBI:145989"/>
    </ligand>
</feature>
<feature type="binding site" evidence="1">
    <location>
        <position position="175"/>
    </location>
    <ligand>
        <name>phosphoenolpyruvate</name>
        <dbReference type="ChEBI" id="CHEBI:58702"/>
    </ligand>
</feature>
<feature type="binding site" evidence="1">
    <location>
        <position position="326"/>
    </location>
    <ligand>
        <name>3-phosphoshikimate</name>
        <dbReference type="ChEBI" id="CHEBI:145989"/>
    </ligand>
</feature>
<feature type="binding site" evidence="1">
    <location>
        <position position="353"/>
    </location>
    <ligand>
        <name>3-phosphoshikimate</name>
        <dbReference type="ChEBI" id="CHEBI:145989"/>
    </ligand>
</feature>
<feature type="binding site" evidence="1">
    <location>
        <position position="357"/>
    </location>
    <ligand>
        <name>phosphoenolpyruvate</name>
        <dbReference type="ChEBI" id="CHEBI:58702"/>
    </ligand>
</feature>
<feature type="binding site" evidence="1">
    <location>
        <position position="402"/>
    </location>
    <ligand>
        <name>phosphoenolpyruvate</name>
        <dbReference type="ChEBI" id="CHEBI:58702"/>
    </ligand>
</feature>
<comment type="function">
    <text evidence="1">Catalyzes the transfer of the enolpyruvyl moiety of phosphoenolpyruvate (PEP) to the 5-hydroxyl of shikimate-3-phosphate (S3P) to produce enolpyruvyl shikimate-3-phosphate and inorganic phosphate.</text>
</comment>
<comment type="catalytic activity">
    <reaction evidence="1">
        <text>3-phosphoshikimate + phosphoenolpyruvate = 5-O-(1-carboxyvinyl)-3-phosphoshikimate + phosphate</text>
        <dbReference type="Rhea" id="RHEA:21256"/>
        <dbReference type="ChEBI" id="CHEBI:43474"/>
        <dbReference type="ChEBI" id="CHEBI:57701"/>
        <dbReference type="ChEBI" id="CHEBI:58702"/>
        <dbReference type="ChEBI" id="CHEBI:145989"/>
        <dbReference type="EC" id="2.5.1.19"/>
    </reaction>
    <physiologicalReaction direction="left-to-right" evidence="1">
        <dbReference type="Rhea" id="RHEA:21257"/>
    </physiologicalReaction>
</comment>
<comment type="pathway">
    <text evidence="1">Metabolic intermediate biosynthesis; chorismate biosynthesis; chorismate from D-erythrose 4-phosphate and phosphoenolpyruvate: step 6/7.</text>
</comment>
<comment type="subunit">
    <text evidence="1">Monomer.</text>
</comment>
<comment type="subcellular location">
    <subcellularLocation>
        <location evidence="1">Cytoplasm</location>
    </subcellularLocation>
</comment>
<comment type="similarity">
    <text evidence="1">Belongs to the EPSP synthase family.</text>
</comment>
<comment type="sequence caution" evidence="2">
    <conflict type="erroneous initiation">
        <sequence resource="EMBL-CDS" id="AAL53098"/>
    </conflict>
    <text>Extended N-terminus.</text>
</comment>
<accession>Q8YEG1</accession>
<keyword id="KW-0028">Amino-acid biosynthesis</keyword>
<keyword id="KW-0057">Aromatic amino acid biosynthesis</keyword>
<keyword id="KW-0963">Cytoplasm</keyword>
<keyword id="KW-0808">Transferase</keyword>